<sequence>MWTGKKVDSARALIARGWGVSLVSRCLRVSRAQLHVILRRTDDWMDGRRSRHTDDTDVLLRIHHVIGELPTYGYRRVWALLRRQAELDGMPAINAKRVYRIMRQNALLLERKPAVPPSKRAHTGRVAVKESNQRWCSDGFEFCCDNGERLRVTFALDCCDREALHWAVTTGGFNSETVQDVMLGAVERRFGNDLPSSPVEWLTDNGSCYRANETRQFARMLGLEPKNTAVRSPESNGIAESFVKTIKRDYISIMPKPDGLTAAKNLAEAFEHYNEWHPHSALGYRSPREYLRQRACNGLSDNRCLEI</sequence>
<accession>P0CF64</accession>
<accession>P0C5W4</accession>
<accession>P19777</accession>
<accession>P76167</accession>
<accession>P76916</accession>
<accession>P77033</accession>
<accession>Q79EJ0</accession>
<name>IND12_ECOLI</name>
<feature type="chain" id="PRO_0000393583" description="Transposase InsD for insertion element IS2-12">
    <location>
        <begin position="1"/>
        <end position="307"/>
    </location>
</feature>
<feature type="domain" description="Integrase catalytic" evidence="1">
    <location>
        <begin position="112"/>
        <end position="295"/>
    </location>
</feature>
<keyword id="KW-0233">DNA recombination</keyword>
<keyword id="KW-0238">DNA-binding</keyword>
<keyword id="KW-0814">Transposable element</keyword>
<keyword id="KW-0815">Transposition</keyword>
<gene>
    <name type="ordered locus">JW5933</name>
</gene>
<proteinExistence type="predicted"/>
<comment type="function">
    <text>Involved in the transposition of the insertion sequence IS2.</text>
</comment>
<organism>
    <name type="scientific">Escherichia coli (strain K12)</name>
    <dbReference type="NCBI Taxonomy" id="83333"/>
    <lineage>
        <taxon>Bacteria</taxon>
        <taxon>Pseudomonadati</taxon>
        <taxon>Pseudomonadota</taxon>
        <taxon>Gammaproteobacteria</taxon>
        <taxon>Enterobacterales</taxon>
        <taxon>Enterobacteriaceae</taxon>
        <taxon>Escherichia</taxon>
    </lineage>
</organism>
<dbReference type="EMBL" id="AP009048">
    <property type="protein sequence ID" value="BAE77577.1"/>
    <property type="molecule type" value="Genomic_DNA"/>
</dbReference>
<dbReference type="SMR" id="P0CF64"/>
<dbReference type="KEGG" id="ecj:JW5933"/>
<dbReference type="HOGENOM" id="CLU_052819_0_0_6"/>
<dbReference type="PhylomeDB" id="P0CF64"/>
<dbReference type="GO" id="GO:0003677">
    <property type="term" value="F:DNA binding"/>
    <property type="evidence" value="ECO:0007669"/>
    <property type="project" value="UniProtKB-KW"/>
</dbReference>
<dbReference type="GO" id="GO:0015074">
    <property type="term" value="P:DNA integration"/>
    <property type="evidence" value="ECO:0007669"/>
    <property type="project" value="InterPro"/>
</dbReference>
<dbReference type="GO" id="GO:0006310">
    <property type="term" value="P:DNA recombination"/>
    <property type="evidence" value="ECO:0007669"/>
    <property type="project" value="UniProtKB-KW"/>
</dbReference>
<dbReference type="GO" id="GO:0032196">
    <property type="term" value="P:transposition"/>
    <property type="evidence" value="ECO:0007669"/>
    <property type="project" value="UniProtKB-KW"/>
</dbReference>
<dbReference type="Gene3D" id="3.30.420.10">
    <property type="entry name" value="Ribonuclease H-like superfamily/Ribonuclease H"/>
    <property type="match status" value="1"/>
</dbReference>
<dbReference type="InterPro" id="IPR025948">
    <property type="entry name" value="HTH-like_dom"/>
</dbReference>
<dbReference type="InterPro" id="IPR001584">
    <property type="entry name" value="Integrase_cat-core"/>
</dbReference>
<dbReference type="InterPro" id="IPR012337">
    <property type="entry name" value="RNaseH-like_sf"/>
</dbReference>
<dbReference type="InterPro" id="IPR036397">
    <property type="entry name" value="RNaseH_sf"/>
</dbReference>
<dbReference type="InterPro" id="IPR048020">
    <property type="entry name" value="Transpos_IS3"/>
</dbReference>
<dbReference type="NCBIfam" id="NF006918">
    <property type="entry name" value="PRK09409.1"/>
    <property type="match status" value="1"/>
</dbReference>
<dbReference type="NCBIfam" id="NF033516">
    <property type="entry name" value="transpos_IS3"/>
    <property type="match status" value="1"/>
</dbReference>
<dbReference type="PANTHER" id="PTHR37936">
    <property type="entry name" value="TRANSPOSASE INSC FOR INSERTION ELEMENT IS2A-RELATED"/>
    <property type="match status" value="1"/>
</dbReference>
<dbReference type="PANTHER" id="PTHR37936:SF3">
    <property type="entry name" value="TRANSPOSASE INSC FOR INSERTION ELEMENT IS2A-RELATED"/>
    <property type="match status" value="1"/>
</dbReference>
<dbReference type="Pfam" id="PF13276">
    <property type="entry name" value="HTH_21"/>
    <property type="match status" value="1"/>
</dbReference>
<dbReference type="Pfam" id="PF00665">
    <property type="entry name" value="rve"/>
    <property type="match status" value="1"/>
</dbReference>
<dbReference type="SUPFAM" id="SSF53098">
    <property type="entry name" value="Ribonuclease H-like"/>
    <property type="match status" value="1"/>
</dbReference>
<dbReference type="PROSITE" id="PS50994">
    <property type="entry name" value="INTEGRASE"/>
    <property type="match status" value="1"/>
</dbReference>
<evidence type="ECO:0000255" key="1">
    <source>
        <dbReference type="PROSITE-ProRule" id="PRU00457"/>
    </source>
</evidence>
<reference key="1">
    <citation type="journal article" date="2006" name="Mol. Syst. Biol.">
        <title>Highly accurate genome sequences of Escherichia coli K-12 strains MG1655 and W3110.</title>
        <authorList>
            <person name="Hayashi K."/>
            <person name="Morooka N."/>
            <person name="Yamamoto Y."/>
            <person name="Fujita K."/>
            <person name="Isono K."/>
            <person name="Choi S."/>
            <person name="Ohtsubo E."/>
            <person name="Baba T."/>
            <person name="Wanner B.L."/>
            <person name="Mori H."/>
            <person name="Horiuchi T."/>
        </authorList>
    </citation>
    <scope>NUCLEOTIDE SEQUENCE [LARGE SCALE GENOMIC DNA]</scope>
    <source>
        <strain>K12 / W3110 / ATCC 27325 / DSM 5911</strain>
    </source>
</reference>
<protein>
    <recommendedName>
        <fullName>Transposase InsD for insertion element IS2-12</fullName>
    </recommendedName>
</protein>